<gene>
    <name evidence="1" type="primary">truA</name>
    <name type="ordered locus">A1C_06660</name>
</gene>
<organism>
    <name type="scientific">Rickettsia akari (strain Hartford)</name>
    <dbReference type="NCBI Taxonomy" id="293614"/>
    <lineage>
        <taxon>Bacteria</taxon>
        <taxon>Pseudomonadati</taxon>
        <taxon>Pseudomonadota</taxon>
        <taxon>Alphaproteobacteria</taxon>
        <taxon>Rickettsiales</taxon>
        <taxon>Rickettsiaceae</taxon>
        <taxon>Rickettsieae</taxon>
        <taxon>Rickettsia</taxon>
        <taxon>spotted fever group</taxon>
    </lineage>
</organism>
<protein>
    <recommendedName>
        <fullName evidence="1">tRNA pseudouridine synthase A</fullName>
        <ecNumber evidence="1">5.4.99.12</ecNumber>
    </recommendedName>
    <alternativeName>
        <fullName evidence="1">tRNA pseudouridine(38-40) synthase</fullName>
    </alternativeName>
    <alternativeName>
        <fullName evidence="1">tRNA pseudouridylate synthase I</fullName>
    </alternativeName>
    <alternativeName>
        <fullName evidence="1">tRNA-uridine isomerase I</fullName>
    </alternativeName>
</protein>
<keyword id="KW-0413">Isomerase</keyword>
<keyword id="KW-0819">tRNA processing</keyword>
<evidence type="ECO:0000255" key="1">
    <source>
        <dbReference type="HAMAP-Rule" id="MF_00171"/>
    </source>
</evidence>
<dbReference type="EC" id="5.4.99.12" evidence="1"/>
<dbReference type="EMBL" id="CP000847">
    <property type="protein sequence ID" value="ABV75555.1"/>
    <property type="molecule type" value="Genomic_DNA"/>
</dbReference>
<dbReference type="RefSeq" id="WP_012150184.1">
    <property type="nucleotide sequence ID" value="NC_009881.1"/>
</dbReference>
<dbReference type="SMR" id="A8GQ80"/>
<dbReference type="STRING" id="293614.A1C_06660"/>
<dbReference type="KEGG" id="rak:A1C_06660"/>
<dbReference type="eggNOG" id="COG0101">
    <property type="taxonomic scope" value="Bacteria"/>
</dbReference>
<dbReference type="HOGENOM" id="CLU_014673_0_1_5"/>
<dbReference type="Proteomes" id="UP000006830">
    <property type="component" value="Chromosome"/>
</dbReference>
<dbReference type="GO" id="GO:0003723">
    <property type="term" value="F:RNA binding"/>
    <property type="evidence" value="ECO:0007669"/>
    <property type="project" value="InterPro"/>
</dbReference>
<dbReference type="GO" id="GO:0160147">
    <property type="term" value="F:tRNA pseudouridine(38-40) synthase activity"/>
    <property type="evidence" value="ECO:0007669"/>
    <property type="project" value="UniProtKB-EC"/>
</dbReference>
<dbReference type="GO" id="GO:0031119">
    <property type="term" value="P:tRNA pseudouridine synthesis"/>
    <property type="evidence" value="ECO:0007669"/>
    <property type="project" value="UniProtKB-UniRule"/>
</dbReference>
<dbReference type="CDD" id="cd02570">
    <property type="entry name" value="PseudoU_synth_EcTruA"/>
    <property type="match status" value="1"/>
</dbReference>
<dbReference type="FunFam" id="3.30.70.580:FF:000001">
    <property type="entry name" value="tRNA pseudouridine synthase A"/>
    <property type="match status" value="1"/>
</dbReference>
<dbReference type="Gene3D" id="3.30.70.660">
    <property type="entry name" value="Pseudouridine synthase I, catalytic domain, C-terminal subdomain"/>
    <property type="match status" value="1"/>
</dbReference>
<dbReference type="Gene3D" id="3.30.70.580">
    <property type="entry name" value="Pseudouridine synthase I, catalytic domain, N-terminal subdomain"/>
    <property type="match status" value="1"/>
</dbReference>
<dbReference type="HAMAP" id="MF_00171">
    <property type="entry name" value="TruA"/>
    <property type="match status" value="1"/>
</dbReference>
<dbReference type="InterPro" id="IPR020103">
    <property type="entry name" value="PsdUridine_synth_cat_dom_sf"/>
</dbReference>
<dbReference type="InterPro" id="IPR001406">
    <property type="entry name" value="PsdUridine_synth_TruA"/>
</dbReference>
<dbReference type="InterPro" id="IPR020097">
    <property type="entry name" value="PsdUridine_synth_TruA_a/b_dom"/>
</dbReference>
<dbReference type="InterPro" id="IPR020095">
    <property type="entry name" value="PsdUridine_synth_TruA_C"/>
</dbReference>
<dbReference type="InterPro" id="IPR020094">
    <property type="entry name" value="TruA/RsuA/RluB/E/F_N"/>
</dbReference>
<dbReference type="NCBIfam" id="TIGR00071">
    <property type="entry name" value="hisT_truA"/>
    <property type="match status" value="1"/>
</dbReference>
<dbReference type="PANTHER" id="PTHR11142">
    <property type="entry name" value="PSEUDOURIDYLATE SYNTHASE"/>
    <property type="match status" value="1"/>
</dbReference>
<dbReference type="PANTHER" id="PTHR11142:SF0">
    <property type="entry name" value="TRNA PSEUDOURIDINE SYNTHASE-LIKE 1"/>
    <property type="match status" value="1"/>
</dbReference>
<dbReference type="Pfam" id="PF01416">
    <property type="entry name" value="PseudoU_synth_1"/>
    <property type="match status" value="2"/>
</dbReference>
<dbReference type="PIRSF" id="PIRSF001430">
    <property type="entry name" value="tRNA_psdUrid_synth"/>
    <property type="match status" value="1"/>
</dbReference>
<dbReference type="SUPFAM" id="SSF55120">
    <property type="entry name" value="Pseudouridine synthase"/>
    <property type="match status" value="1"/>
</dbReference>
<sequence>MYRYKITIEYLGTNLAGWQRQAGVMSVQQILEEAIYKFSGEQVILFGSGRTDAGVHAIGQVAHFDLSKYLEPHKIITAINYFARPYAVVVWHCAIVLNDFHARFSATSRHYIYRIINRPYPSVIDLNRAWWISSPLDVLAMQKAAAYLLGKHDFTSFRASSCQSKSPIKTLTELNIVKGDEEIKLYLSAPSFLHHMVRNIVGSLVLVGKNIWQAEHIKDVLEAKDRKAAGLTAPAYGLYFVKTEY</sequence>
<proteinExistence type="inferred from homology"/>
<name>TRUA_RICAH</name>
<reference key="1">
    <citation type="submission" date="2007-09" db="EMBL/GenBank/DDBJ databases">
        <title>Complete genome sequence of Rickettsia akari.</title>
        <authorList>
            <person name="Madan A."/>
            <person name="Fahey J."/>
            <person name="Helton E."/>
            <person name="Ketteman M."/>
            <person name="Madan A."/>
            <person name="Rodrigues S."/>
            <person name="Sanchez A."/>
            <person name="Whiting M."/>
            <person name="Dasch G."/>
            <person name="Eremeeva M."/>
        </authorList>
    </citation>
    <scope>NUCLEOTIDE SEQUENCE [LARGE SCALE GENOMIC DNA]</scope>
    <source>
        <strain>Hartford</strain>
    </source>
</reference>
<accession>A8GQ80</accession>
<feature type="chain" id="PRO_1000017156" description="tRNA pseudouridine synthase A">
    <location>
        <begin position="1"/>
        <end position="245"/>
    </location>
</feature>
<feature type="active site" description="Nucleophile" evidence="1">
    <location>
        <position position="52"/>
    </location>
</feature>
<feature type="binding site" evidence="1">
    <location>
        <position position="111"/>
    </location>
    <ligand>
        <name>substrate</name>
    </ligand>
</feature>
<comment type="function">
    <text evidence="1">Formation of pseudouridine at positions 38, 39 and 40 in the anticodon stem and loop of transfer RNAs.</text>
</comment>
<comment type="catalytic activity">
    <reaction evidence="1">
        <text>uridine(38/39/40) in tRNA = pseudouridine(38/39/40) in tRNA</text>
        <dbReference type="Rhea" id="RHEA:22376"/>
        <dbReference type="Rhea" id="RHEA-COMP:10085"/>
        <dbReference type="Rhea" id="RHEA-COMP:10087"/>
        <dbReference type="ChEBI" id="CHEBI:65314"/>
        <dbReference type="ChEBI" id="CHEBI:65315"/>
        <dbReference type="EC" id="5.4.99.12"/>
    </reaction>
</comment>
<comment type="subunit">
    <text evidence="1">Homodimer.</text>
</comment>
<comment type="similarity">
    <text evidence="1">Belongs to the tRNA pseudouridine synthase TruA family.</text>
</comment>